<evidence type="ECO:0000250" key="1"/>
<evidence type="ECO:0000250" key="2">
    <source>
        <dbReference type="UniProtKB" id="Q8VCD6"/>
    </source>
</evidence>
<evidence type="ECO:0000255" key="3"/>
<evidence type="ECO:0000256" key="4">
    <source>
        <dbReference type="SAM" id="MobiDB-lite"/>
    </source>
</evidence>
<evidence type="ECO:0000269" key="5">
    <source>
    </source>
</evidence>
<evidence type="ECO:0000269" key="6">
    <source>
    </source>
</evidence>
<evidence type="ECO:0000269" key="7">
    <source>
    </source>
</evidence>
<evidence type="ECO:0000303" key="8">
    <source>
    </source>
</evidence>
<evidence type="ECO:0000303" key="9">
    <source ref="2"/>
</evidence>
<evidence type="ECO:0000305" key="10"/>
<accession>Q9BRK0</accession>
<accession>Q53EM8</accession>
<accession>Q9NYF2</accession>
<proteinExistence type="evidence at protein level"/>
<protein>
    <recommendedName>
        <fullName>Receptor expression-enhancing protein 2</fullName>
    </recommendedName>
</protein>
<reference key="1">
    <citation type="journal article" date="2004" name="Cell">
        <title>RTP family members induce functional expression of mammalian odorant receptors.</title>
        <authorList>
            <person name="Saito H."/>
            <person name="Kubota M."/>
            <person name="Roberts R.W."/>
            <person name="Chi Q."/>
            <person name="Matsunami H."/>
        </authorList>
    </citation>
    <scope>NUCLEOTIDE SEQUENCE [MRNA] (ISOFORM 1)</scope>
</reference>
<reference key="2">
    <citation type="submission" date="2005-04" db="EMBL/GenBank/DDBJ databases">
        <authorList>
            <person name="Totoki Y."/>
            <person name="Toyoda A."/>
            <person name="Takeda T."/>
            <person name="Sakaki Y."/>
            <person name="Tanaka A."/>
            <person name="Yokoyama S."/>
        </authorList>
    </citation>
    <scope>NUCLEOTIDE SEQUENCE [LARGE SCALE MRNA] (ISOFORM 2)</scope>
    <source>
        <tissue>Brain</tissue>
    </source>
</reference>
<reference key="3">
    <citation type="journal article" date="2004" name="Genome Res.">
        <title>The status, quality, and expansion of the NIH full-length cDNA project: the Mammalian Gene Collection (MGC).</title>
        <authorList>
            <consortium name="The MGC Project Team"/>
        </authorList>
    </citation>
    <scope>NUCLEOTIDE SEQUENCE [LARGE SCALE MRNA] (ISOFORM 1)</scope>
    <source>
        <tissue>Lung</tissue>
    </source>
</reference>
<reference key="4">
    <citation type="journal article" date="2001" name="Genomics">
        <title>Transcript map and comparative analysis of the 1.5-Mb commonly deleted segment of human 5q31 in malignant myeloid diseases with a del(5q).</title>
        <authorList>
            <person name="Lai F."/>
            <person name="Godley L.A."/>
            <person name="Joslin J."/>
            <person name="Fernald A.A."/>
            <person name="Liu J."/>
            <person name="Espinosa R. III"/>
            <person name="Zhao N."/>
            <person name="Pamintuan L."/>
            <person name="Till B.G."/>
            <person name="Larson R.A."/>
            <person name="Qian Z."/>
            <person name="Le Beau M.M."/>
        </authorList>
    </citation>
    <scope>NUCLEOTIDE SEQUENCE [MRNA] OF 8-252 (ISOFORM 2)</scope>
    <scope>TISSUE SPECIFICITY</scope>
</reference>
<reference key="5">
    <citation type="journal article" date="2006" name="J. Biol. Chem.">
        <title>Members of RTP and REEP gene families influence functional bitter taste receptor expression.</title>
        <authorList>
            <person name="Behrens M."/>
            <person name="Bartelt J."/>
            <person name="Reichling C."/>
            <person name="Winnig M."/>
            <person name="Kuhn C."/>
            <person name="Meyerhof W."/>
        </authorList>
    </citation>
    <scope>TISSUE SPECIFICITY</scope>
</reference>
<reference key="6">
    <citation type="journal article" date="2014" name="Am. J. Hum. Genet.">
        <title>Loss of association of REEP2 with membranes leads to hereditary spastic paraplegia.</title>
        <authorList>
            <person name="Esteves T."/>
            <person name="Durr A."/>
            <person name="Mundwiller E."/>
            <person name="Loureiro J.L."/>
            <person name="Boutry M."/>
            <person name="Gonzalez M.A."/>
            <person name="Gauthier J."/>
            <person name="El-Hachimi K.H."/>
            <person name="Depienne C."/>
            <person name="Muriel M.P."/>
            <person name="Acosta Lebrigio R.F."/>
            <person name="Gaussen M."/>
            <person name="Noreau A."/>
            <person name="Speziani F."/>
            <person name="Dionne-Laporte A."/>
            <person name="Deleuze J.F."/>
            <person name="Dion P."/>
            <person name="Coutinho P."/>
            <person name="Rouleau G.A."/>
            <person name="Zuchner S."/>
            <person name="Brice A."/>
            <person name="Stevanin G."/>
            <person name="Darios F."/>
        </authorList>
    </citation>
    <scope>FUNCTION</scope>
    <scope>VARIANT SPG72A GLU-36</scope>
    <scope>VARIANT SPG72B TYR-72</scope>
    <scope>CHARACTERIZATION OF VARIANT SPG72A GLU-36</scope>
    <scope>CHARACTERIZATION OF VARIANT SPG72B TYR-72</scope>
</reference>
<keyword id="KW-0025">Alternative splicing</keyword>
<keyword id="KW-0225">Disease variant</keyword>
<keyword id="KW-0890">Hereditary spastic paraplegia</keyword>
<keyword id="KW-0472">Membrane</keyword>
<keyword id="KW-0523">Neurodegeneration</keyword>
<keyword id="KW-0597">Phosphoprotein</keyword>
<keyword id="KW-1267">Proteomics identification</keyword>
<keyword id="KW-1185">Reference proteome</keyword>
<keyword id="KW-0812">Transmembrane</keyword>
<keyword id="KW-1133">Transmembrane helix</keyword>
<dbReference type="EMBL" id="AY562240">
    <property type="protein sequence ID" value="AAT70685.1"/>
    <property type="molecule type" value="mRNA"/>
</dbReference>
<dbReference type="EMBL" id="AK223611">
    <property type="protein sequence ID" value="BAD97331.1"/>
    <property type="molecule type" value="mRNA"/>
</dbReference>
<dbReference type="EMBL" id="BC006218">
    <property type="protein sequence ID" value="AAH06218.2"/>
    <property type="molecule type" value="mRNA"/>
</dbReference>
<dbReference type="EMBL" id="AF251041">
    <property type="protein sequence ID" value="AAF63767.1"/>
    <property type="status" value="ALT_FRAME"/>
    <property type="molecule type" value="mRNA"/>
</dbReference>
<dbReference type="CCDS" id="CCDS4205.1">
    <molecule id="Q9BRK0-1"/>
</dbReference>
<dbReference type="CCDS" id="CCDS64259.1">
    <molecule id="Q9BRK0-2"/>
</dbReference>
<dbReference type="RefSeq" id="NP_001258732.1">
    <molecule id="Q9BRK0-2"/>
    <property type="nucleotide sequence ID" value="NM_001271803.2"/>
</dbReference>
<dbReference type="RefSeq" id="NP_057690.2">
    <molecule id="Q9BRK0-1"/>
    <property type="nucleotide sequence ID" value="NM_016606.3"/>
</dbReference>
<dbReference type="BioGRID" id="119459">
    <property type="interactions" value="72"/>
</dbReference>
<dbReference type="FunCoup" id="Q9BRK0">
    <property type="interactions" value="444"/>
</dbReference>
<dbReference type="IntAct" id="Q9BRK0">
    <property type="interactions" value="50"/>
</dbReference>
<dbReference type="STRING" id="9606.ENSP00000367590"/>
<dbReference type="GlyGen" id="Q9BRK0">
    <property type="glycosylation" value="1 site"/>
</dbReference>
<dbReference type="iPTMnet" id="Q9BRK0"/>
<dbReference type="PhosphoSitePlus" id="Q9BRK0"/>
<dbReference type="BioMuta" id="REEP2"/>
<dbReference type="DMDM" id="74732895"/>
<dbReference type="jPOST" id="Q9BRK0"/>
<dbReference type="MassIVE" id="Q9BRK0"/>
<dbReference type="PaxDb" id="9606-ENSP00000367590"/>
<dbReference type="PeptideAtlas" id="Q9BRK0"/>
<dbReference type="ProteomicsDB" id="78774">
    <molecule id="Q9BRK0-1"/>
</dbReference>
<dbReference type="ProteomicsDB" id="78775">
    <molecule id="Q9BRK0-2"/>
</dbReference>
<dbReference type="Pumba" id="Q9BRK0"/>
<dbReference type="Antibodypedia" id="26670">
    <property type="antibodies" value="394 antibodies from 28 providers"/>
</dbReference>
<dbReference type="DNASU" id="51308"/>
<dbReference type="Ensembl" id="ENST00000254901.9">
    <molecule id="Q9BRK0-1"/>
    <property type="protein sequence ID" value="ENSP00000254901.5"/>
    <property type="gene ID" value="ENSG00000132563.17"/>
</dbReference>
<dbReference type="Ensembl" id="ENST00000378339.7">
    <molecule id="Q9BRK0-2"/>
    <property type="protein sequence ID" value="ENSP00000367590.2"/>
    <property type="gene ID" value="ENSG00000132563.17"/>
</dbReference>
<dbReference type="GeneID" id="51308"/>
<dbReference type="KEGG" id="hsa:51308"/>
<dbReference type="MANE-Select" id="ENST00000378339.7">
    <molecule id="Q9BRK0-2"/>
    <property type="protein sequence ID" value="ENSP00000367590.2"/>
    <property type="RefSeq nucleotide sequence ID" value="NM_001271803.2"/>
    <property type="RefSeq protein sequence ID" value="NP_001258732.1"/>
</dbReference>
<dbReference type="UCSC" id="uc003lcz.5">
    <molecule id="Q9BRK0-1"/>
    <property type="organism name" value="human"/>
</dbReference>
<dbReference type="AGR" id="HGNC:17975"/>
<dbReference type="CTD" id="51308"/>
<dbReference type="DisGeNET" id="51308"/>
<dbReference type="GeneCards" id="REEP2"/>
<dbReference type="HGNC" id="HGNC:17975">
    <property type="gene designation" value="REEP2"/>
</dbReference>
<dbReference type="HPA" id="ENSG00000132563">
    <property type="expression patterns" value="Tissue enhanced (brain, choroid plexus, retina)"/>
</dbReference>
<dbReference type="MalaCards" id="REEP2"/>
<dbReference type="MIM" id="609347">
    <property type="type" value="gene"/>
</dbReference>
<dbReference type="MIM" id="615625">
    <property type="type" value="phenotype"/>
</dbReference>
<dbReference type="MIM" id="620606">
    <property type="type" value="phenotype"/>
</dbReference>
<dbReference type="neXtProt" id="NX_Q9BRK0"/>
<dbReference type="OpenTargets" id="ENSG00000132563"/>
<dbReference type="Orphanet" id="401849">
    <property type="disease" value="Autosomal spastic paraplegia type 72"/>
</dbReference>
<dbReference type="PharmGKB" id="PA134920985"/>
<dbReference type="VEuPathDB" id="HostDB:ENSG00000132563"/>
<dbReference type="eggNOG" id="KOG1726">
    <property type="taxonomic scope" value="Eukaryota"/>
</dbReference>
<dbReference type="GeneTree" id="ENSGT00940000160001"/>
<dbReference type="HOGENOM" id="CLU_028431_0_1_1"/>
<dbReference type="InParanoid" id="Q9BRK0"/>
<dbReference type="OMA" id="WAERCPV"/>
<dbReference type="OrthoDB" id="434647at2759"/>
<dbReference type="PAN-GO" id="Q9BRK0">
    <property type="GO annotations" value="6 GO annotations based on evolutionary models"/>
</dbReference>
<dbReference type="PhylomeDB" id="Q9BRK0"/>
<dbReference type="TreeFam" id="TF314177"/>
<dbReference type="PathwayCommons" id="Q9BRK0"/>
<dbReference type="SignaLink" id="Q9BRK0"/>
<dbReference type="BioGRID-ORCS" id="51308">
    <property type="hits" value="11 hits in 1141 CRISPR screens"/>
</dbReference>
<dbReference type="ChiTaRS" id="REEP2">
    <property type="organism name" value="human"/>
</dbReference>
<dbReference type="GeneWiki" id="REEP2"/>
<dbReference type="GenomeRNAi" id="51308"/>
<dbReference type="Pharos" id="Q9BRK0">
    <property type="development level" value="Tbio"/>
</dbReference>
<dbReference type="PRO" id="PR:Q9BRK0"/>
<dbReference type="Proteomes" id="UP000005640">
    <property type="component" value="Chromosome 5"/>
</dbReference>
<dbReference type="RNAct" id="Q9BRK0">
    <property type="molecule type" value="protein"/>
</dbReference>
<dbReference type="Bgee" id="ENSG00000132563">
    <property type="expression patterns" value="Expressed in right hemisphere of cerebellum and 160 other cell types or tissues"/>
</dbReference>
<dbReference type="ExpressionAtlas" id="Q9BRK0">
    <property type="expression patterns" value="baseline and differential"/>
</dbReference>
<dbReference type="GO" id="GO:0005881">
    <property type="term" value="C:cytoplasmic microtubule"/>
    <property type="evidence" value="ECO:0000314"/>
    <property type="project" value="UniProtKB"/>
</dbReference>
<dbReference type="GO" id="GO:0005783">
    <property type="term" value="C:endoplasmic reticulum"/>
    <property type="evidence" value="ECO:0000315"/>
    <property type="project" value="UniProtKB"/>
</dbReference>
<dbReference type="GO" id="GO:0005789">
    <property type="term" value="C:endoplasmic reticulum membrane"/>
    <property type="evidence" value="ECO:0000318"/>
    <property type="project" value="GO_Central"/>
</dbReference>
<dbReference type="GO" id="GO:0071782">
    <property type="term" value="C:endoplasmic reticulum tubular network"/>
    <property type="evidence" value="ECO:0000318"/>
    <property type="project" value="GO_Central"/>
</dbReference>
<dbReference type="GO" id="GO:0005886">
    <property type="term" value="C:plasma membrane"/>
    <property type="evidence" value="ECO:0007669"/>
    <property type="project" value="Ensembl"/>
</dbReference>
<dbReference type="GO" id="GO:0008017">
    <property type="term" value="F:microtubule binding"/>
    <property type="evidence" value="ECO:0000318"/>
    <property type="project" value="GO_Central"/>
</dbReference>
<dbReference type="GO" id="GO:0031883">
    <property type="term" value="F:taste receptor binding"/>
    <property type="evidence" value="ECO:0000318"/>
    <property type="project" value="GO_Central"/>
</dbReference>
<dbReference type="GO" id="GO:0071786">
    <property type="term" value="P:endoplasmic reticulum tubular network organization"/>
    <property type="evidence" value="ECO:0000315"/>
    <property type="project" value="UniProtKB"/>
</dbReference>
<dbReference type="GO" id="GO:0032596">
    <property type="term" value="P:protein transport into membrane raft"/>
    <property type="evidence" value="ECO:0007669"/>
    <property type="project" value="Ensembl"/>
</dbReference>
<dbReference type="GO" id="GO:0032386">
    <property type="term" value="P:regulation of intracellular transport"/>
    <property type="evidence" value="ECO:0007669"/>
    <property type="project" value="Ensembl"/>
</dbReference>
<dbReference type="GO" id="GO:0050913">
    <property type="term" value="P:sensory perception of bitter taste"/>
    <property type="evidence" value="ECO:0007669"/>
    <property type="project" value="Ensembl"/>
</dbReference>
<dbReference type="GO" id="GO:0050916">
    <property type="term" value="P:sensory perception of sweet taste"/>
    <property type="evidence" value="ECO:0007669"/>
    <property type="project" value="Ensembl"/>
</dbReference>
<dbReference type="InterPro" id="IPR004345">
    <property type="entry name" value="TB2_DP1_HVA22"/>
</dbReference>
<dbReference type="PANTHER" id="PTHR12300">
    <property type="entry name" value="HVA22-LIKE PROTEINS"/>
    <property type="match status" value="1"/>
</dbReference>
<dbReference type="PANTHER" id="PTHR12300:SF29">
    <property type="entry name" value="RECEPTOR EXPRESSION-ENHANCING PROTEIN 2"/>
    <property type="match status" value="1"/>
</dbReference>
<dbReference type="Pfam" id="PF03134">
    <property type="entry name" value="TB2_DP1_HVA22"/>
    <property type="match status" value="1"/>
</dbReference>
<gene>
    <name type="primary">REEP2</name>
    <name type="synonym">C5orf19</name>
    <name type="synonym">SGC32445</name>
</gene>
<name>REEP2_HUMAN</name>
<feature type="chain" id="PRO_0000101823" description="Receptor expression-enhancing protein 2">
    <location>
        <begin position="1"/>
        <end position="252"/>
    </location>
</feature>
<feature type="transmembrane region" description="Helical" evidence="3">
    <location>
        <begin position="1"/>
        <end position="21"/>
    </location>
</feature>
<feature type="transmembrane region" description="Helical" evidence="3">
    <location>
        <begin position="35"/>
        <end position="55"/>
    </location>
</feature>
<feature type="region of interest" description="Disordered" evidence="4">
    <location>
        <begin position="165"/>
        <end position="252"/>
    </location>
</feature>
<feature type="compositionally biased region" description="Basic and acidic residues" evidence="4">
    <location>
        <begin position="203"/>
        <end position="217"/>
    </location>
</feature>
<feature type="modified residue" description="Phosphoserine" evidence="2">
    <location>
        <position position="150"/>
    </location>
</feature>
<feature type="splice variant" id="VSP_016633" description="In isoform 2." evidence="8 9">
    <original>K</original>
    <variation>KGQ</variation>
    <location>
        <position position="139"/>
    </location>
</feature>
<feature type="sequence variant" id="VAR_070996" description="In SPG72A; abolishes REEP2 interaction with membranes; affects correct shaping of the endoplasmic reticulum; dbSNP:rs483352923." evidence="7">
    <original>V</original>
    <variation>E</variation>
    <location>
        <position position="36"/>
    </location>
</feature>
<feature type="sequence variant" id="VAR_070997" description="In SPG72B; reduces REEP2 interaction with membranes; affects correct shaping of the endoplasmic reticulum; dbSNP:rs483352925." evidence="7">
    <original>F</original>
    <variation>Y</variation>
    <location>
        <position position="72"/>
    </location>
</feature>
<sequence length="252" mass="28261">MVSWIISRLVVLIFGTLYPAYSSYKAVKTKNVKEYVKWMMYWIVFAFFTTAETLTDIVLSWFPFYFELKIAFVIWLLSPYTKGSSVLYRKFVHPTLSNKEKEIDEYITQARDKSYETMMRVGKRGLNLAANAAVTAAAKGVLSEKLRSFSMQDLTLIRDEDALPLQRPDGRLRPSPGSLLDTIEDLGDDPALSLRSSTNPADSRTEASEDDMGDKAPKRAKPIKKAPKAEPLASKTLKTRPKKKTSGGGDSA</sequence>
<organism>
    <name type="scientific">Homo sapiens</name>
    <name type="common">Human</name>
    <dbReference type="NCBI Taxonomy" id="9606"/>
    <lineage>
        <taxon>Eukaryota</taxon>
        <taxon>Metazoa</taxon>
        <taxon>Chordata</taxon>
        <taxon>Craniata</taxon>
        <taxon>Vertebrata</taxon>
        <taxon>Euteleostomi</taxon>
        <taxon>Mammalia</taxon>
        <taxon>Eutheria</taxon>
        <taxon>Euarchontoglires</taxon>
        <taxon>Primates</taxon>
        <taxon>Haplorrhini</taxon>
        <taxon>Catarrhini</taxon>
        <taxon>Hominidae</taxon>
        <taxon>Homo</taxon>
    </lineage>
</organism>
<comment type="function">
    <text evidence="1 7">Required for endoplasmic reticulum (ER) network formation, shaping and remodeling. May enhance the cell surface expression of odorant receptors (By similarity).</text>
</comment>
<comment type="subunit">
    <text evidence="1">Interacts with odorant receptor proteins.</text>
</comment>
<comment type="interaction">
    <interactant intactId="EBI-11337973">
        <id>Q9BRK0</id>
    </interactant>
    <interactant intactId="EBI-749464">
        <id>Q12983</id>
        <label>BNIP3</label>
    </interactant>
    <organismsDiffer>false</organismsDiffer>
    <experiments>3</experiments>
</comment>
<comment type="interaction">
    <interactant intactId="EBI-11337973">
        <id>Q9BRK0</id>
    </interactant>
    <interactant intactId="EBI-12822627">
        <id>O14523</id>
        <label>C2CD2L</label>
    </interactant>
    <organismsDiffer>false</organismsDiffer>
    <experiments>3</experiments>
</comment>
<comment type="interaction">
    <interactant intactId="EBI-11337973">
        <id>Q9BRK0</id>
    </interactant>
    <interactant intactId="EBI-11522780">
        <id>Q96DZ9-2</id>
        <label>CMTM5</label>
    </interactant>
    <organismsDiffer>false</organismsDiffer>
    <experiments>3</experiments>
</comment>
<comment type="interaction">
    <interactant intactId="EBI-11337973">
        <id>Q9BRK0</id>
    </interactant>
    <interactant intactId="EBI-1752413">
        <id>P78329</id>
        <label>CYP4F2</label>
    </interactant>
    <organismsDiffer>false</organismsDiffer>
    <experiments>3</experiments>
</comment>
<comment type="interaction">
    <interactant intactId="EBI-11337973">
        <id>Q9BRK0</id>
    </interactant>
    <interactant intactId="EBI-17509525">
        <id>Q6NT55</id>
        <label>CYP4F22</label>
    </interactant>
    <organismsDiffer>false</organismsDiffer>
    <experiments>3</experiments>
</comment>
<comment type="interaction">
    <interactant intactId="EBI-11337973">
        <id>Q9BRK0</id>
    </interactant>
    <interactant intactId="EBI-2568251">
        <id>P11215</id>
        <label>ITGAM</label>
    </interactant>
    <organismsDiffer>false</organismsDiffer>
    <experiments>3</experiments>
</comment>
<comment type="interaction">
    <interactant intactId="EBI-11337973">
        <id>Q9BRK0</id>
    </interactant>
    <interactant intactId="EBI-2808234">
        <id>P11836</id>
        <label>MS4A1</label>
    </interactant>
    <organismsDiffer>false</organismsDiffer>
    <experiments>3</experiments>
</comment>
<comment type="interaction">
    <interactant intactId="EBI-11337973">
        <id>Q9BRK0</id>
    </interactant>
    <interactant intactId="EBI-744120">
        <id>Q969V5</id>
        <label>MUL1</label>
    </interactant>
    <organismsDiffer>false</organismsDiffer>
    <experiments>3</experiments>
</comment>
<comment type="interaction">
    <interactant intactId="EBI-11337973">
        <id>Q9BRK0</id>
    </interactant>
    <interactant intactId="EBI-2863634">
        <id>Q9UHE5</id>
        <label>NAT8</label>
    </interactant>
    <organismsDiffer>false</organismsDiffer>
    <experiments>3</experiments>
</comment>
<comment type="interaction">
    <interactant intactId="EBI-11337973">
        <id>Q9BRK0</id>
    </interactant>
    <interactant intactId="EBI-721750">
        <id>Q8N138</id>
        <label>ORMDL3</label>
    </interactant>
    <organismsDiffer>false</organismsDiffer>
    <experiments>3</experiments>
</comment>
<comment type="interaction">
    <interactant intactId="EBI-11337973">
        <id>Q9BRK0</id>
    </interactant>
    <interactant intactId="EBI-712367">
        <id>Q9UI14</id>
        <label>RABAC1</label>
    </interactant>
    <organismsDiffer>false</organismsDiffer>
    <experiments>3</experiments>
</comment>
<comment type="interaction">
    <interactant intactId="EBI-11337973">
        <id>Q9BRK0</id>
    </interactant>
    <interactant intactId="EBI-2684237">
        <id>O00767</id>
        <label>SCD</label>
    </interactant>
    <organismsDiffer>false</organismsDiffer>
    <experiments>3</experiments>
</comment>
<comment type="interaction">
    <interactant intactId="EBI-11337973">
        <id>Q9BRK0</id>
    </interactant>
    <interactant intactId="EBI-4402330">
        <id>O95562</id>
        <label>SFT2D2</label>
    </interactant>
    <organismsDiffer>false</organismsDiffer>
    <experiments>3</experiments>
</comment>
<comment type="interaction">
    <interactant intactId="EBI-11337973">
        <id>Q9BRK0</id>
    </interactant>
    <interactant intactId="EBI-12889748">
        <id>O15374-3</id>
        <label>SLC16A4</label>
    </interactant>
    <organismsDiffer>false</organismsDiffer>
    <experiments>3</experiments>
</comment>
<comment type="interaction">
    <interactant intactId="EBI-11337973">
        <id>Q9BRK0</id>
    </interactant>
    <interactant intactId="EBI-10281975">
        <id>Q96AG3</id>
        <label>SLC25A46</label>
    </interactant>
    <organismsDiffer>false</organismsDiffer>
    <experiments>3</experiments>
</comment>
<comment type="interaction">
    <interactant intactId="EBI-11337973">
        <id>Q9BRK0</id>
    </interactant>
    <interactant intactId="EBI-1045825">
        <id>P55061</id>
        <label>TMBIM6</label>
    </interactant>
    <organismsDiffer>false</organismsDiffer>
    <experiments>3</experiments>
</comment>
<comment type="interaction">
    <interactant intactId="EBI-11337973">
        <id>Q9BRK0</id>
    </interactant>
    <interactant intactId="EBI-10171534">
        <id>A0PK00</id>
        <label>TMEM120B</label>
    </interactant>
    <organismsDiffer>false</organismsDiffer>
    <experiments>3</experiments>
</comment>
<comment type="interaction">
    <interactant intactId="EBI-11337973">
        <id>Q9BRK0</id>
    </interactant>
    <interactant intactId="EBI-12876824">
        <id>Q9BTX3</id>
        <label>TMEM208</label>
    </interactant>
    <organismsDiffer>false</organismsDiffer>
    <experiments>3</experiments>
</comment>
<comment type="interaction">
    <interactant intactId="EBI-11337973">
        <id>Q9BRK0</id>
    </interactant>
    <interactant intactId="EBI-11528917">
        <id>Q8WW34-2</id>
        <label>TMEM239</label>
    </interactant>
    <organismsDiffer>false</organismsDiffer>
    <experiments>3</experiments>
</comment>
<comment type="interaction">
    <interactant intactId="EBI-11337973">
        <id>Q9BRK0</id>
    </interactant>
    <interactant intactId="EBI-12038591">
        <id>Q69YG0</id>
        <label>TMEM42</label>
    </interactant>
    <organismsDiffer>false</organismsDiffer>
    <experiments>3</experiments>
</comment>
<comment type="interaction">
    <interactant intactId="EBI-11337973">
        <id>Q9BRK0</id>
    </interactant>
    <interactant intactId="EBI-2852148">
        <id>Q9H2L4</id>
        <label>TMEM60</label>
    </interactant>
    <organismsDiffer>false</organismsDiffer>
    <experiments>3</experiments>
</comment>
<comment type="interaction">
    <interactant intactId="EBI-11337973">
        <id>Q9BRK0</id>
    </interactant>
    <interactant intactId="EBI-6447886">
        <id>Q9Y320</id>
        <label>TMX2</label>
    </interactant>
    <organismsDiffer>false</organismsDiffer>
    <experiments>3</experiments>
</comment>
<comment type="interaction">
    <interactant intactId="EBI-11337973">
        <id>Q9BRK0</id>
    </interactant>
    <interactant intactId="EBI-10210710">
        <id>P49638</id>
        <label>TTPA</label>
    </interactant>
    <organismsDiffer>false</organismsDiffer>
    <experiments>3</experiments>
</comment>
<comment type="interaction">
    <interactant intactId="EBI-11337973">
        <id>Q9BRK0</id>
    </interactant>
    <interactant intactId="EBI-2799703">
        <id>O95070</id>
        <label>YIF1A</label>
    </interactant>
    <organismsDiffer>false</organismsDiffer>
    <experiments>3</experiments>
</comment>
<comment type="subcellular location">
    <subcellularLocation>
        <location evidence="1">Membrane</location>
        <topology evidence="1">Multi-pass membrane protein</topology>
    </subcellularLocation>
</comment>
<comment type="alternative products">
    <event type="alternative splicing"/>
    <isoform>
        <id>Q9BRK0-1</id>
        <name>1</name>
        <sequence type="displayed"/>
    </isoform>
    <isoform>
        <id>Q9BRK0-2</id>
        <name>2</name>
        <sequence type="described" ref="VSP_016633"/>
    </isoform>
</comment>
<comment type="tissue specificity">
    <text evidence="5 6">Detected in brain, heart and skeletal muscle, and at low levels in placenta, kidney and pancreas (PubMed:11161817). Expressed in circumvallate papillae (PubMed:16720576).</text>
</comment>
<comment type="disease" evidence="7">
    <disease id="DI-04028">
        <name>Spastic paraplegia 72A, autosomal dominant</name>
        <acronym>SPG72A</acronym>
        <description>A form of spastic paraplegia, a neurodegenerative disorder characterized by a slow, gradual, progressive weakness and spasticity of the lower limbs. Rate of progression and the severity of symptoms are quite variable. Initial symptoms may include difficulty with balance, weakness and stiffness in the legs, muscle spasms, and dragging the toes when walking. In some forms of the disorder, bladder symptoms (such as incontinence) may appear, or the weakness and stiffness may spread to other parts of the body. SPG72A is a pure form of spastic paraplegia with onset of difficulty walking and stiff legs associated with hyperreflexia and extensor plantar responses in early childhood. Some patients may have pes cavus or sphincter disturbances. Cognition, speech, and ocular function are normal.</description>
        <dbReference type="MIM" id="615625"/>
    </disease>
    <text>The disease is caused by variants affecting the gene represented in this entry.</text>
</comment>
<comment type="disease" evidence="7">
    <disease id="DI-06768">
        <name>Spastic paraplegia 72B, autosomal recessive</name>
        <acronym>SPG72B</acronym>
        <description>A form of spastic paraplegia, a neurodegenerative disorder characterized by a slow, gradual, progressive weakness and spasticity of the lower limbs. Rate of progression and the severity of symptoms are quite variable. Initial symptoms may include difficulty with balance, weakness and stiffness in the legs, muscle spasms, and dragging the toes when walking. In some forms of the disorder, bladder symptoms (such as incontinence) may appear, or the weakness and stiffness may spread to other parts of the body. SPG72B is a pure form of spastic paraplegia with onset of difficulty walking and stiff legs associated with hyperreflexia and extensor plantar responses in early childhood. Cognition, speech, and ocular function are normal.</description>
        <dbReference type="MIM" id="620606"/>
    </disease>
    <text>The disease is caused by variants affecting the gene represented in this entry.</text>
</comment>
<comment type="similarity">
    <text evidence="10">Belongs to the DP1 family.</text>
</comment>
<comment type="sequence caution" evidence="10">
    <conflict type="frameshift">
        <sequence resource="EMBL-CDS" id="AAF63767"/>
    </conflict>
</comment>